<protein>
    <recommendedName>
        <fullName evidence="7">BOS complex subunit NOMO3</fullName>
    </recommendedName>
    <alternativeName>
        <fullName>Nodal modulator 3</fullName>
    </alternativeName>
    <alternativeName>
        <fullName>pM5 protein 3</fullName>
    </alternativeName>
</protein>
<dbReference type="EMBL" id="AC136624">
    <property type="status" value="NOT_ANNOTATED_CDS"/>
    <property type="molecule type" value="Genomic_DNA"/>
</dbReference>
<dbReference type="EMBL" id="U91318">
    <property type="protein sequence ID" value="AAC15783.1"/>
    <property type="molecule type" value="Genomic_DNA"/>
</dbReference>
<dbReference type="CCDS" id="CCDS42123.1"/>
<dbReference type="RefSeq" id="NP_001004067.1">
    <property type="nucleotide sequence ID" value="NM_001004067.4"/>
</dbReference>
<dbReference type="SMR" id="P69849"/>
<dbReference type="BioGRID" id="135912">
    <property type="interactions" value="83"/>
</dbReference>
<dbReference type="ComplexPortal" id="CPX-8023">
    <property type="entry name" value="BOS complex, NOMO3 variant"/>
</dbReference>
<dbReference type="FunCoup" id="P69849">
    <property type="interactions" value="520"/>
</dbReference>
<dbReference type="IntAct" id="P69849">
    <property type="interactions" value="32"/>
</dbReference>
<dbReference type="MINT" id="P69849"/>
<dbReference type="STRING" id="9606.ENSP00000382274"/>
<dbReference type="GlyConnect" id="1574">
    <property type="glycosylation" value="8 N-Linked glycans (3 sites)"/>
</dbReference>
<dbReference type="GlyCosmos" id="P69849">
    <property type="glycosylation" value="4 sites, 8 glycans"/>
</dbReference>
<dbReference type="GlyGen" id="P69849">
    <property type="glycosylation" value="7 sites, 10 N-linked glycans (5 sites), 1 O-linked glycan (1 site)"/>
</dbReference>
<dbReference type="iPTMnet" id="P69849"/>
<dbReference type="MetOSite" id="P69849"/>
<dbReference type="PhosphoSitePlus" id="P69849"/>
<dbReference type="SwissPalm" id="P69849"/>
<dbReference type="BioMuta" id="NOMO3"/>
<dbReference type="DMDM" id="296439242"/>
<dbReference type="jPOST" id="P69849"/>
<dbReference type="MassIVE" id="P69849"/>
<dbReference type="PaxDb" id="9606-ENSP00000382274"/>
<dbReference type="PeptideAtlas" id="P69849"/>
<dbReference type="ProteomicsDB" id="57544"/>
<dbReference type="Pumba" id="P69849"/>
<dbReference type="Antibodypedia" id="68531">
    <property type="antibodies" value="5 antibodies from 5 providers"/>
</dbReference>
<dbReference type="DNASU" id="408050"/>
<dbReference type="Ensembl" id="ENST00000399336.9">
    <property type="protein sequence ID" value="ENSP00000382274.4"/>
    <property type="gene ID" value="ENSG00000103226.19"/>
</dbReference>
<dbReference type="Ensembl" id="ENST00000611106.4">
    <property type="protein sequence ID" value="ENSP00000483234.1"/>
    <property type="gene ID" value="ENSG00000278087.4"/>
</dbReference>
<dbReference type="Ensembl" id="ENST00000676846.1">
    <property type="protein sequence ID" value="ENSP00000504575.1"/>
    <property type="gene ID" value="ENSG00000103226.19"/>
</dbReference>
<dbReference type="Ensembl" id="ENST00000677777.1">
    <property type="protein sequence ID" value="ENSP00000504325.1"/>
    <property type="gene ID" value="ENSG00000103226.19"/>
</dbReference>
<dbReference type="GeneID" id="408050"/>
<dbReference type="KEGG" id="hsa:408050"/>
<dbReference type="MANE-Select" id="ENST00000399336.9">
    <property type="protein sequence ID" value="ENSP00000382274.4"/>
    <property type="RefSeq nucleotide sequence ID" value="NM_001004067.4"/>
    <property type="RefSeq protein sequence ID" value="NP_001004067.1"/>
</dbReference>
<dbReference type="UCSC" id="uc002deq.4">
    <property type="organism name" value="human"/>
</dbReference>
<dbReference type="AGR" id="HGNC:25242"/>
<dbReference type="CTD" id="408050"/>
<dbReference type="DisGeNET" id="408050"/>
<dbReference type="GeneCards" id="NOMO3"/>
<dbReference type="HGNC" id="HGNC:25242">
    <property type="gene designation" value="NOMO3"/>
</dbReference>
<dbReference type="HPA" id="ENSG00000103226">
    <property type="expression patterns" value="Tissue enhanced (pancreas)"/>
</dbReference>
<dbReference type="MIM" id="609159">
    <property type="type" value="gene"/>
</dbReference>
<dbReference type="neXtProt" id="NX_P69849"/>
<dbReference type="OpenTargets" id="ENSG00000103226"/>
<dbReference type="PharmGKB" id="PA134950400"/>
<dbReference type="VEuPathDB" id="HostDB:ENSG00000103226"/>
<dbReference type="eggNOG" id="KOG1948">
    <property type="taxonomic scope" value="Eukaryota"/>
</dbReference>
<dbReference type="GeneTree" id="ENSGT00390000000089"/>
<dbReference type="HOGENOM" id="CLU_007543_2_0_1"/>
<dbReference type="InParanoid" id="P69849"/>
<dbReference type="OMA" id="FVFKGFG"/>
<dbReference type="OrthoDB" id="10263633at2759"/>
<dbReference type="PAN-GO" id="P69849">
    <property type="GO annotations" value="1 GO annotation based on evolutionary models"/>
</dbReference>
<dbReference type="PhylomeDB" id="P69849"/>
<dbReference type="TreeFam" id="TF313696"/>
<dbReference type="PathwayCommons" id="P69849"/>
<dbReference type="SignaLink" id="P69849"/>
<dbReference type="BioGRID-ORCS" id="408050">
    <property type="hits" value="23 hits in 664 CRISPR screens"/>
</dbReference>
<dbReference type="ChiTaRS" id="NOMO3">
    <property type="organism name" value="human"/>
</dbReference>
<dbReference type="GenomeRNAi" id="408050"/>
<dbReference type="Pharos" id="P69849">
    <property type="development level" value="Tdark"/>
</dbReference>
<dbReference type="PRO" id="PR:P69849"/>
<dbReference type="Proteomes" id="UP000005640">
    <property type="component" value="Chromosome 16"/>
</dbReference>
<dbReference type="RNAct" id="P69849">
    <property type="molecule type" value="protein"/>
</dbReference>
<dbReference type="Bgee" id="ENSG00000103226">
    <property type="expression patterns" value="Expressed in body of pancreas and 99 other cell types or tissues"/>
</dbReference>
<dbReference type="ExpressionAtlas" id="P69849">
    <property type="expression patterns" value="baseline and differential"/>
</dbReference>
<dbReference type="GO" id="GO:0005789">
    <property type="term" value="C:endoplasmic reticulum membrane"/>
    <property type="evidence" value="ECO:0000318"/>
    <property type="project" value="GO_Central"/>
</dbReference>
<dbReference type="GO" id="GO:0160064">
    <property type="term" value="C:multi-pass translocon complex"/>
    <property type="evidence" value="ECO:0000314"/>
    <property type="project" value="UniProtKB"/>
</dbReference>
<dbReference type="GO" id="GO:0030246">
    <property type="term" value="F:carbohydrate binding"/>
    <property type="evidence" value="ECO:0007669"/>
    <property type="project" value="InterPro"/>
</dbReference>
<dbReference type="GO" id="GO:0043022">
    <property type="term" value="F:ribosome binding"/>
    <property type="evidence" value="ECO:0000314"/>
    <property type="project" value="UniProtKB"/>
</dbReference>
<dbReference type="GO" id="GO:0003140">
    <property type="term" value="P:determination of left/right asymmetry in lateral mesoderm"/>
    <property type="evidence" value="ECO:0000250"/>
    <property type="project" value="BHF-UCL"/>
</dbReference>
<dbReference type="GO" id="GO:0160063">
    <property type="term" value="P:multi-pass transmembrane protein insertion into ER membrane"/>
    <property type="evidence" value="ECO:0000314"/>
    <property type="project" value="UniProtKB"/>
</dbReference>
<dbReference type="GO" id="GO:1900108">
    <property type="term" value="P:negative regulation of nodal signaling pathway"/>
    <property type="evidence" value="ECO:0000250"/>
    <property type="project" value="BHF-UCL"/>
</dbReference>
<dbReference type="FunFam" id="2.60.40.1120:FF:000001">
    <property type="entry name" value="Nodal modulator 1"/>
    <property type="match status" value="1"/>
</dbReference>
<dbReference type="Gene3D" id="2.60.40.1120">
    <property type="entry name" value="Carboxypeptidase-like, regulatory domain"/>
    <property type="match status" value="1"/>
</dbReference>
<dbReference type="Gene3D" id="2.60.40.10">
    <property type="entry name" value="Immunoglobulins"/>
    <property type="match status" value="1"/>
</dbReference>
<dbReference type="InterPro" id="IPR013784">
    <property type="entry name" value="Carb-bd-like_fold"/>
</dbReference>
<dbReference type="InterPro" id="IPR008969">
    <property type="entry name" value="CarboxyPept-like_regulatory"/>
</dbReference>
<dbReference type="InterPro" id="IPR013783">
    <property type="entry name" value="Ig-like_fold"/>
</dbReference>
<dbReference type="InterPro" id="IPR055075">
    <property type="entry name" value="NOMO-like_N"/>
</dbReference>
<dbReference type="InterPro" id="IPR055074">
    <property type="entry name" value="NOMO1-3_2nd"/>
</dbReference>
<dbReference type="InterPro" id="IPR055073">
    <property type="entry name" value="NOMO1-like_9th"/>
</dbReference>
<dbReference type="InterPro" id="IPR056191">
    <property type="entry name" value="NOMO_12th"/>
</dbReference>
<dbReference type="InterPro" id="IPR056189">
    <property type="entry name" value="NOMO_3rd"/>
</dbReference>
<dbReference type="InterPro" id="IPR056190">
    <property type="entry name" value="NOMO_5th"/>
</dbReference>
<dbReference type="InterPro" id="IPR056188">
    <property type="entry name" value="NOMO_6th"/>
</dbReference>
<dbReference type="InterPro" id="IPR056319">
    <property type="entry name" value="NOMO_7th"/>
</dbReference>
<dbReference type="InterPro" id="IPR056187">
    <property type="entry name" value="NOMO_8th"/>
</dbReference>
<dbReference type="InterPro" id="IPR051417">
    <property type="entry name" value="SDr/BOS_complex"/>
</dbReference>
<dbReference type="InterPro" id="IPR041033">
    <property type="entry name" value="SpaA_PFL_dom_1"/>
</dbReference>
<dbReference type="PANTHER" id="PTHR23303:SF14">
    <property type="entry name" value="BOS COMPLEX SUBUNIT NOMO1-RELATED"/>
    <property type="match status" value="1"/>
</dbReference>
<dbReference type="PANTHER" id="PTHR23303">
    <property type="entry name" value="CARBOXYPEPTIDASE REGULATORY REGION-CONTAINING"/>
    <property type="match status" value="1"/>
</dbReference>
<dbReference type="Pfam" id="PF13620">
    <property type="entry name" value="CarboxypepD_reg"/>
    <property type="match status" value="1"/>
</dbReference>
<dbReference type="Pfam" id="PF23141">
    <property type="entry name" value="Ig_NOMO"/>
    <property type="match status" value="1"/>
</dbReference>
<dbReference type="Pfam" id="PF22898">
    <property type="entry name" value="NOMO1-like_1st"/>
    <property type="match status" value="1"/>
</dbReference>
<dbReference type="Pfam" id="PF22904">
    <property type="entry name" value="NOMO1-like_2nd"/>
    <property type="match status" value="1"/>
</dbReference>
<dbReference type="Pfam" id="PF22902">
    <property type="entry name" value="NOMO1-like_9th"/>
    <property type="match status" value="1"/>
</dbReference>
<dbReference type="Pfam" id="PF23192">
    <property type="entry name" value="NOMO_12th"/>
    <property type="match status" value="1"/>
</dbReference>
<dbReference type="Pfam" id="PF23193">
    <property type="entry name" value="NOMO_3rd"/>
    <property type="match status" value="1"/>
</dbReference>
<dbReference type="Pfam" id="PF23194">
    <property type="entry name" value="NOMO_5th"/>
    <property type="match status" value="1"/>
</dbReference>
<dbReference type="Pfam" id="PF23196">
    <property type="entry name" value="NOMO_6th"/>
    <property type="match status" value="1"/>
</dbReference>
<dbReference type="Pfam" id="PF23660">
    <property type="entry name" value="NOMO_8th"/>
    <property type="match status" value="1"/>
</dbReference>
<dbReference type="Pfam" id="PF17802">
    <property type="entry name" value="SpaA"/>
    <property type="match status" value="1"/>
</dbReference>
<dbReference type="SUPFAM" id="SSF49464">
    <property type="entry name" value="Carboxypeptidase regulatory domain-like"/>
    <property type="match status" value="1"/>
</dbReference>
<dbReference type="SUPFAM" id="SSF49452">
    <property type="entry name" value="Starch-binding domain-like"/>
    <property type="match status" value="3"/>
</dbReference>
<proteinExistence type="evidence at protein level"/>
<comment type="function">
    <text evidence="5 6">Component of the multi-pass translocon (MPT) complex that mediates insertion of multi-pass membrane proteins into the lipid bilayer of membranes (PubMed:32820719, PubMed:36261522). The MPT complex takes over after the SEC61 complex: following membrane insertion of the first few transmembrane segments of proteins by the SEC61 complex, the MPT complex occludes the lateral gate of the SEC61 complex to promote insertion of subsequent transmembrane regions (PubMed:36261522).</text>
</comment>
<comment type="subunit">
    <text evidence="4 5 6">Component of the back of Sec61 (BOS) complex, composed of NCLN/Nicalin, NOMO (NOMO1, NOMO2 or NOMO3) and TMEM147 (PubMed:20538592, PubMed:36261522). The BOS complex is part of the multi-pass translocon (MPT) complex, composed of three subcomplexes, the GEL complex (composed of RAB5IF/OPTI and TMCO1), the BOS complex (composed of NCLN/Nicalin, NOMO and TMEM147) and the PAT complex (composed of WDR83OS/Asterix and CCDC47) (PubMed:32820719, PubMed:36261522). The MPT complex associates with the SEC61 complex (PubMed:32820719, PubMed:36261522). Due to the strong similarity between NOMO1, NOMO2 and NOMO3, similar interaction pattern probably occur for the three gene copies (PubMed:20538592, PubMed:32820719).</text>
</comment>
<comment type="interaction">
    <interactant intactId="EBI-947048">
        <id>P69849</id>
    </interactant>
    <interactant intactId="EBI-711823">
        <id>Q7L5D6</id>
        <label>GET4</label>
    </interactant>
    <organismsDiffer>false</organismsDiffer>
    <experiments>2</experiments>
</comment>
<comment type="interaction">
    <interactant intactId="EBI-947048">
        <id>P69849</id>
    </interactant>
    <interactant intactId="EBI-25487941">
        <id>PRO_0000037315</id>
        <label>rep</label>
        <dbReference type="UniProtKB" id="P0C6X7"/>
    </interactant>
    <organismsDiffer>true</organismsDiffer>
    <experiments>2</experiments>
</comment>
<comment type="subcellular location">
    <subcellularLocation>
        <location evidence="3 6">Endoplasmic reticulum membrane</location>
        <topology evidence="1">Single-pass type I membrane protein</topology>
    </subcellularLocation>
</comment>
<comment type="caution">
    <text evidence="7">There are 3 copies of the NOMO gene on chromosome 16p12-p13: NOMO1 (AC Q5JPE7), NOMO2 (AC Q5JPE7) and NOMO3. All 3 are extremely similar, which makes their individual characterization difficult. Thus, most experiments probably do not discriminate between the different members. The results reported in other entries may therefore apply for this protein.</text>
</comment>
<keyword id="KW-0256">Endoplasmic reticulum</keyword>
<keyword id="KW-0325">Glycoprotein</keyword>
<keyword id="KW-0472">Membrane</keyword>
<keyword id="KW-1267">Proteomics identification</keyword>
<keyword id="KW-1185">Reference proteome</keyword>
<keyword id="KW-0732">Signal</keyword>
<keyword id="KW-0812">Transmembrane</keyword>
<keyword id="KW-1133">Transmembrane helix</keyword>
<organism>
    <name type="scientific">Homo sapiens</name>
    <name type="common">Human</name>
    <dbReference type="NCBI Taxonomy" id="9606"/>
    <lineage>
        <taxon>Eukaryota</taxon>
        <taxon>Metazoa</taxon>
        <taxon>Chordata</taxon>
        <taxon>Craniata</taxon>
        <taxon>Vertebrata</taxon>
        <taxon>Euteleostomi</taxon>
        <taxon>Mammalia</taxon>
        <taxon>Eutheria</taxon>
        <taxon>Euarchontoglires</taxon>
        <taxon>Primates</taxon>
        <taxon>Haplorrhini</taxon>
        <taxon>Catarrhini</taxon>
        <taxon>Hominidae</taxon>
        <taxon>Homo</taxon>
    </lineage>
</organism>
<sequence length="1222" mass="134134">MLVGQGAGPLGPAVVTAAVVLLLSGVGPAHGSEDIVVGCGGFVKSDVEINYSLIEIKLYTKHGTLKYQTDCAPNNGYFMIPLYDKGDFILKIEPPLGWSFEPTTVELHVDGVSDICTKGGDINFVFTGFSVNGKVLSKGQPLGPAGVQVSLRNTGTEAKIQSTVTQPGGKFAFFKVLPGDYEILATHPTWALKEASTTVRVTNSNANAASPLIVAGYNVSGSVRSDGEPMKGVKFLLFSSLVTKEDVLGCNVSPVPGFQPQDESLVYLCYTVSREDGSFSFYSLPSGGYTVIPFYRGERITFDVAPSRLDFTVEHDSLKIEPVFHVMGFSVTGRVLNGPEGDGVPEAVVTLNNQIKVKTKADGSFRLENITTGTYTIHAQKEHLYFETVTIKIAPNTPQLADIVATGFSVCGQISIIRFPDTVKQMNKYKVVLSSQDKDKSLVTVETDAHGSFCFKANPGTYKVQVMVPEAETRAGLTLKPQTFPLTVTDRPVMDVAFVQFLASVSGKVSCLDTCGDLLVTLQSLSRQGEKRSLQLSGKVNAMTFTFDNVLPGKYKISIMHEDWCWKNKSLEVEVLEDDVSAVEFRQTGYMLRCSLSHAITLEFYQDGNGRENVGIYNLSKGVNRFCLSKPGVYKVTPRSCHRFEQAFYTYDTSSPSILTLTAIRHHVLGTITTDKMMDVTVTIKSSIDSEPALVLGPLKSVQELRREQQLAEIEARRQEREKNGNEEGEERMTKPPVQEMVDELQGPFSYDFSYWARSGEKITVTPSSKELLFYPPSMEAVVSGESCPGKLIEIHGKAGLFLEGQIHPELEGVEIVISEKGASSPLITVFTDDKGAYSVGPLHSDLEYTVTSQKEGYVLTAVEGTIGDFKAYALAGVSFEIKAEDDQPLPGVLLSLSGGLFRSNLLTQDNGILTFSNLSPGQYYFKPMMKEFRFEPSSQMIEVQEGQNLKITITGYRTAYSCYGTVSSLNGEPEQGVAMEAVGQNDCSIYGEDTVTDEEGKFRLRGLLPGCVYHVQLKAEGNDHIERALPHHRVIEVGNNDIDDVNIIVFRQINQFDLSGNVITSSEYLPTLWVKLYKSENLDNPIQTVSLGQSLFFHFPPLLRDGENYVVLLDSTLPRSQYDYILPQVSFTAVGYHKHITLIFNPTRKLPEQDIAQGSYIALPLTLLVLLAGYNHDKLIPLLLQLTSRLQGVGALGQAASDNSGPEDAKRQAKKQKTRRT</sequence>
<reference key="1">
    <citation type="journal article" date="2004" name="Nature">
        <title>The sequence and analysis of duplication-rich human chromosome 16.</title>
        <authorList>
            <person name="Martin J."/>
            <person name="Han C."/>
            <person name="Gordon L.A."/>
            <person name="Terry A."/>
            <person name="Prabhakar S."/>
            <person name="She X."/>
            <person name="Xie G."/>
            <person name="Hellsten U."/>
            <person name="Chan Y.M."/>
            <person name="Altherr M."/>
            <person name="Couronne O."/>
            <person name="Aerts A."/>
            <person name="Bajorek E."/>
            <person name="Black S."/>
            <person name="Blumer H."/>
            <person name="Branscomb E."/>
            <person name="Brown N.C."/>
            <person name="Bruno W.J."/>
            <person name="Buckingham J.M."/>
            <person name="Callen D.F."/>
            <person name="Campbell C.S."/>
            <person name="Campbell M.L."/>
            <person name="Campbell E.W."/>
            <person name="Caoile C."/>
            <person name="Challacombe J.F."/>
            <person name="Chasteen L.A."/>
            <person name="Chertkov O."/>
            <person name="Chi H.C."/>
            <person name="Christensen M."/>
            <person name="Clark L.M."/>
            <person name="Cohn J.D."/>
            <person name="Denys M."/>
            <person name="Detter J.C."/>
            <person name="Dickson M."/>
            <person name="Dimitrijevic-Bussod M."/>
            <person name="Escobar J."/>
            <person name="Fawcett J.J."/>
            <person name="Flowers D."/>
            <person name="Fotopulos D."/>
            <person name="Glavina T."/>
            <person name="Gomez M."/>
            <person name="Gonzales E."/>
            <person name="Goodstein D."/>
            <person name="Goodwin L.A."/>
            <person name="Grady D.L."/>
            <person name="Grigoriev I."/>
            <person name="Groza M."/>
            <person name="Hammon N."/>
            <person name="Hawkins T."/>
            <person name="Haydu L."/>
            <person name="Hildebrand C.E."/>
            <person name="Huang W."/>
            <person name="Israni S."/>
            <person name="Jett J."/>
            <person name="Jewett P.B."/>
            <person name="Kadner K."/>
            <person name="Kimball H."/>
            <person name="Kobayashi A."/>
            <person name="Krawczyk M.-C."/>
            <person name="Leyba T."/>
            <person name="Longmire J.L."/>
            <person name="Lopez F."/>
            <person name="Lou Y."/>
            <person name="Lowry S."/>
            <person name="Ludeman T."/>
            <person name="Manohar C.F."/>
            <person name="Mark G.A."/>
            <person name="McMurray K.L."/>
            <person name="Meincke L.J."/>
            <person name="Morgan J."/>
            <person name="Moyzis R.K."/>
            <person name="Mundt M.O."/>
            <person name="Munk A.C."/>
            <person name="Nandkeshwar R.D."/>
            <person name="Pitluck S."/>
            <person name="Pollard M."/>
            <person name="Predki P."/>
            <person name="Parson-Quintana B."/>
            <person name="Ramirez L."/>
            <person name="Rash S."/>
            <person name="Retterer J."/>
            <person name="Ricke D.O."/>
            <person name="Robinson D.L."/>
            <person name="Rodriguez A."/>
            <person name="Salamov A."/>
            <person name="Saunders E.H."/>
            <person name="Scott D."/>
            <person name="Shough T."/>
            <person name="Stallings R.L."/>
            <person name="Stalvey M."/>
            <person name="Sutherland R.D."/>
            <person name="Tapia R."/>
            <person name="Tesmer J.G."/>
            <person name="Thayer N."/>
            <person name="Thompson L.S."/>
            <person name="Tice H."/>
            <person name="Torney D.C."/>
            <person name="Tran-Gyamfi M."/>
            <person name="Tsai M."/>
            <person name="Ulanovsky L.E."/>
            <person name="Ustaszewska A."/>
            <person name="Vo N."/>
            <person name="White P.S."/>
            <person name="Williams A.L."/>
            <person name="Wills P.L."/>
            <person name="Wu J.-R."/>
            <person name="Wu K."/>
            <person name="Yang J."/>
            <person name="DeJong P."/>
            <person name="Bruce D."/>
            <person name="Doggett N.A."/>
            <person name="Deaven L."/>
            <person name="Schmutz J."/>
            <person name="Grimwood J."/>
            <person name="Richardson P."/>
            <person name="Rokhsar D.S."/>
            <person name="Eichler E.E."/>
            <person name="Gilna P."/>
            <person name="Lucas S.M."/>
            <person name="Myers R.M."/>
            <person name="Rubin E.M."/>
            <person name="Pennacchio L.A."/>
        </authorList>
    </citation>
    <scope>NUCLEOTIDE SEQUENCE [LARGE SCALE GENOMIC DNA]</scope>
</reference>
<reference key="2">
    <citation type="journal article" date="1999" name="Genomics">
        <title>Genome duplications and other features in 12 Mb of DNA sequence from human chromosome 16p and 16q.</title>
        <authorList>
            <person name="Loftus B.J."/>
            <person name="Kim U.-J."/>
            <person name="Sneddon V.P."/>
            <person name="Kalush F."/>
            <person name="Brandon R."/>
            <person name="Fuhrmann J."/>
            <person name="Mason T."/>
            <person name="Crosby M.L."/>
            <person name="Barnstead M."/>
            <person name="Cronin L."/>
            <person name="Mays A.D."/>
            <person name="Cao Y."/>
            <person name="Xu R.X."/>
            <person name="Kang H.-L."/>
            <person name="Mitchell S."/>
            <person name="Eichler E.E."/>
            <person name="Harris P.C."/>
            <person name="Venter J.C."/>
            <person name="Adams M.D."/>
        </authorList>
    </citation>
    <scope>NUCLEOTIDE SEQUENCE [LARGE SCALE GENOMIC DNA] OF 1-1148</scope>
</reference>
<reference key="3">
    <citation type="journal article" date="2007" name="J. Biol. Chem.">
        <title>The Nicastrin-like protein Nicalin regulates assembly and stability of the Nicalin-nodal modulator (NOMO) membrane protein complex.</title>
        <authorList>
            <person name="Haffner C."/>
            <person name="Dettmer U."/>
            <person name="Weiler T."/>
            <person name="Haass C."/>
        </authorList>
    </citation>
    <scope>INTERACTION WITH NCLN</scope>
    <scope>SUBCELLULAR LOCATION</scope>
</reference>
<reference key="4">
    <citation type="journal article" date="2010" name="J. Biol. Chem.">
        <title>Transmembrane protein 147 (TMEM147) is a novel component of the Nicalin-NOMO protein complex.</title>
        <authorList>
            <person name="Dettmer U."/>
            <person name="Kuhn P.H."/>
            <person name="Abou-Ajram C."/>
            <person name="Lichtenthaler S.F."/>
            <person name="Kruger M."/>
            <person name="Kremmer E."/>
            <person name="Haass C."/>
            <person name="Haffner C."/>
        </authorList>
    </citation>
    <scope>INTERACTION WITH NCLN AND TMEM147</scope>
</reference>
<reference key="5">
    <citation type="journal article" date="2020" name="Elife">
        <title>An ER translocon for multi-pass membrane protein biogenesis.</title>
        <authorList>
            <person name="McGilvray P.T."/>
            <person name="Anghel S.A."/>
            <person name="Sundaram A."/>
            <person name="Zhong F."/>
            <person name="Trnka M.J."/>
            <person name="Fuller J.R."/>
            <person name="Hu H."/>
            <person name="Burlingame A.L."/>
            <person name="Keenan R.J."/>
        </authorList>
    </citation>
    <scope>FUNCTION</scope>
    <scope>INTERACTION WITH TMCO1; CCDC47; NCLN; TMEM147; SEC61A1; SEC61B AND SEC61G</scope>
</reference>
<reference key="6">
    <citation type="journal article" date="2022" name="Nature">
        <title>Substrate-driven assembly of a translocon for multipass membrane proteins.</title>
        <authorList>
            <person name="Sundaram A."/>
            <person name="Yamsek M."/>
            <person name="Zhong F."/>
            <person name="Hooda Y."/>
            <person name="Hegde R.S."/>
            <person name="Keenan R.J."/>
        </authorList>
    </citation>
    <scope>FUNCTION</scope>
    <scope>IDENTIFICATION IN THE MULTI-PASS TRANSLOCON COMPLEX</scope>
    <scope>SUBCELLULAR LOCATION</scope>
</reference>
<name>NOMO3_HUMAN</name>
<evidence type="ECO:0000255" key="1"/>
<evidence type="ECO:0000256" key="2">
    <source>
        <dbReference type="SAM" id="MobiDB-lite"/>
    </source>
</evidence>
<evidence type="ECO:0000269" key="3">
    <source>
    </source>
</evidence>
<evidence type="ECO:0000269" key="4">
    <source>
    </source>
</evidence>
<evidence type="ECO:0000269" key="5">
    <source>
    </source>
</evidence>
<evidence type="ECO:0000269" key="6">
    <source>
    </source>
</evidence>
<evidence type="ECO:0000305" key="7"/>
<gene>
    <name type="primary">NOMO3</name>
</gene>
<feature type="signal peptide" evidence="1">
    <location>
        <begin position="1"/>
        <end position="31"/>
    </location>
</feature>
<feature type="chain" id="PRO_0000021821" description="BOS complex subunit NOMO3">
    <location>
        <begin position="32"/>
        <end position="1222"/>
    </location>
</feature>
<feature type="topological domain" description="Extracellular" evidence="1">
    <location>
        <begin position="32"/>
        <end position="1155"/>
    </location>
</feature>
<feature type="transmembrane region" description="Helical" evidence="1">
    <location>
        <begin position="1156"/>
        <end position="1176"/>
    </location>
</feature>
<feature type="topological domain" description="Cytoplasmic" evidence="1">
    <location>
        <begin position="1177"/>
        <end position="1222"/>
    </location>
</feature>
<feature type="region of interest" description="Disordered" evidence="2">
    <location>
        <begin position="1198"/>
        <end position="1222"/>
    </location>
</feature>
<feature type="compositionally biased region" description="Basic residues" evidence="2">
    <location>
        <begin position="1213"/>
        <end position="1222"/>
    </location>
</feature>
<feature type="glycosylation site" description="N-linked (GlcNAc...) asparagine" evidence="1">
    <location>
        <position position="50"/>
    </location>
</feature>
<feature type="glycosylation site" description="N-linked (GlcNAc...) asparagine" evidence="1">
    <location>
        <position position="218"/>
    </location>
</feature>
<feature type="glycosylation site" description="N-linked (GlcNAc...) asparagine" evidence="1">
    <location>
        <position position="618"/>
    </location>
</feature>
<feature type="sequence conflict" description="In Ref. 2; AAC15783." evidence="7" ref="2">
    <original>N</original>
    <variation>K</variation>
    <location>
        <position position="726"/>
    </location>
</feature>
<feature type="sequence conflict" description="In Ref. 2; AAC15783." evidence="7" ref="2">
    <original>I</original>
    <variation>F</variation>
    <location>
        <position position="1141"/>
    </location>
</feature>
<accession>P69849</accession>